<organism>
    <name type="scientific">Arabidopsis thaliana</name>
    <name type="common">Mouse-ear cress</name>
    <dbReference type="NCBI Taxonomy" id="3702"/>
    <lineage>
        <taxon>Eukaryota</taxon>
        <taxon>Viridiplantae</taxon>
        <taxon>Streptophyta</taxon>
        <taxon>Embryophyta</taxon>
        <taxon>Tracheophyta</taxon>
        <taxon>Spermatophyta</taxon>
        <taxon>Magnoliopsida</taxon>
        <taxon>eudicotyledons</taxon>
        <taxon>Gunneridae</taxon>
        <taxon>Pentapetalae</taxon>
        <taxon>rosids</taxon>
        <taxon>malvids</taxon>
        <taxon>Brassicales</taxon>
        <taxon>Brassicaceae</taxon>
        <taxon>Camelineae</taxon>
        <taxon>Arabidopsis</taxon>
    </lineage>
</organism>
<proteinExistence type="evidence at protein level"/>
<reference key="1">
    <citation type="journal article" date="1999" name="Nature">
        <title>Sequence and analysis of chromosome 4 of the plant Arabidopsis thaliana.</title>
        <authorList>
            <person name="Mayer K.F.X."/>
            <person name="Schueller C."/>
            <person name="Wambutt R."/>
            <person name="Murphy G."/>
            <person name="Volckaert G."/>
            <person name="Pohl T."/>
            <person name="Duesterhoeft A."/>
            <person name="Stiekema W."/>
            <person name="Entian K.-D."/>
            <person name="Terryn N."/>
            <person name="Harris B."/>
            <person name="Ansorge W."/>
            <person name="Brandt P."/>
            <person name="Grivell L.A."/>
            <person name="Rieger M."/>
            <person name="Weichselgartner M."/>
            <person name="de Simone V."/>
            <person name="Obermaier B."/>
            <person name="Mache R."/>
            <person name="Mueller M."/>
            <person name="Kreis M."/>
            <person name="Delseny M."/>
            <person name="Puigdomenech P."/>
            <person name="Watson M."/>
            <person name="Schmidtheini T."/>
            <person name="Reichert B."/>
            <person name="Portetelle D."/>
            <person name="Perez-Alonso M."/>
            <person name="Boutry M."/>
            <person name="Bancroft I."/>
            <person name="Vos P."/>
            <person name="Hoheisel J."/>
            <person name="Zimmermann W."/>
            <person name="Wedler H."/>
            <person name="Ridley P."/>
            <person name="Langham S.-A."/>
            <person name="McCullagh B."/>
            <person name="Bilham L."/>
            <person name="Robben J."/>
            <person name="van der Schueren J."/>
            <person name="Grymonprez B."/>
            <person name="Chuang Y.-J."/>
            <person name="Vandenbussche F."/>
            <person name="Braeken M."/>
            <person name="Weltjens I."/>
            <person name="Voet M."/>
            <person name="Bastiaens I."/>
            <person name="Aert R."/>
            <person name="Defoor E."/>
            <person name="Weitzenegger T."/>
            <person name="Bothe G."/>
            <person name="Ramsperger U."/>
            <person name="Hilbert H."/>
            <person name="Braun M."/>
            <person name="Holzer E."/>
            <person name="Brandt A."/>
            <person name="Peters S."/>
            <person name="van Staveren M."/>
            <person name="Dirkse W."/>
            <person name="Mooijman P."/>
            <person name="Klein Lankhorst R."/>
            <person name="Rose M."/>
            <person name="Hauf J."/>
            <person name="Koetter P."/>
            <person name="Berneiser S."/>
            <person name="Hempel S."/>
            <person name="Feldpausch M."/>
            <person name="Lamberth S."/>
            <person name="Van den Daele H."/>
            <person name="De Keyser A."/>
            <person name="Buysshaert C."/>
            <person name="Gielen J."/>
            <person name="Villarroel R."/>
            <person name="De Clercq R."/>
            <person name="van Montagu M."/>
            <person name="Rogers J."/>
            <person name="Cronin A."/>
            <person name="Quail M.A."/>
            <person name="Bray-Allen S."/>
            <person name="Clark L."/>
            <person name="Doggett J."/>
            <person name="Hall S."/>
            <person name="Kay M."/>
            <person name="Lennard N."/>
            <person name="McLay K."/>
            <person name="Mayes R."/>
            <person name="Pettett A."/>
            <person name="Rajandream M.A."/>
            <person name="Lyne M."/>
            <person name="Benes V."/>
            <person name="Rechmann S."/>
            <person name="Borkova D."/>
            <person name="Bloecker H."/>
            <person name="Scharfe M."/>
            <person name="Grimm M."/>
            <person name="Loehnert T.-H."/>
            <person name="Dose S."/>
            <person name="de Haan M."/>
            <person name="Maarse A.C."/>
            <person name="Schaefer M."/>
            <person name="Mueller-Auer S."/>
            <person name="Gabel C."/>
            <person name="Fuchs M."/>
            <person name="Fartmann B."/>
            <person name="Granderath K."/>
            <person name="Dauner D."/>
            <person name="Herzl A."/>
            <person name="Neumann S."/>
            <person name="Argiriou A."/>
            <person name="Vitale D."/>
            <person name="Liguori R."/>
            <person name="Piravandi E."/>
            <person name="Massenet O."/>
            <person name="Quigley F."/>
            <person name="Clabauld G."/>
            <person name="Muendlein A."/>
            <person name="Felber R."/>
            <person name="Schnabl S."/>
            <person name="Hiller R."/>
            <person name="Schmidt W."/>
            <person name="Lecharny A."/>
            <person name="Aubourg S."/>
            <person name="Chefdor F."/>
            <person name="Cooke R."/>
            <person name="Berger C."/>
            <person name="Monfort A."/>
            <person name="Casacuberta E."/>
            <person name="Gibbons T."/>
            <person name="Weber N."/>
            <person name="Vandenbol M."/>
            <person name="Bargues M."/>
            <person name="Terol J."/>
            <person name="Torres A."/>
            <person name="Perez-Perez A."/>
            <person name="Purnelle B."/>
            <person name="Bent E."/>
            <person name="Johnson S."/>
            <person name="Tacon D."/>
            <person name="Jesse T."/>
            <person name="Heijnen L."/>
            <person name="Schwarz S."/>
            <person name="Scholler P."/>
            <person name="Heber S."/>
            <person name="Francs P."/>
            <person name="Bielke C."/>
            <person name="Frishman D."/>
            <person name="Haase D."/>
            <person name="Lemcke K."/>
            <person name="Mewes H.-W."/>
            <person name="Stocker S."/>
            <person name="Zaccaria P."/>
            <person name="Bevan M."/>
            <person name="Wilson R.K."/>
            <person name="de la Bastide M."/>
            <person name="Habermann K."/>
            <person name="Parnell L."/>
            <person name="Dedhia N."/>
            <person name="Gnoj L."/>
            <person name="Schutz K."/>
            <person name="Huang E."/>
            <person name="Spiegel L."/>
            <person name="Sekhon M."/>
            <person name="Murray J."/>
            <person name="Sheet P."/>
            <person name="Cordes M."/>
            <person name="Abu-Threideh J."/>
            <person name="Stoneking T."/>
            <person name="Kalicki J."/>
            <person name="Graves T."/>
            <person name="Harmon G."/>
            <person name="Edwards J."/>
            <person name="Latreille P."/>
            <person name="Courtney L."/>
            <person name="Cloud J."/>
            <person name="Abbott A."/>
            <person name="Scott K."/>
            <person name="Johnson D."/>
            <person name="Minx P."/>
            <person name="Bentley D."/>
            <person name="Fulton B."/>
            <person name="Miller N."/>
            <person name="Greco T."/>
            <person name="Kemp K."/>
            <person name="Kramer J."/>
            <person name="Fulton L."/>
            <person name="Mardis E."/>
            <person name="Dante M."/>
            <person name="Pepin K."/>
            <person name="Hillier L.W."/>
            <person name="Nelson J."/>
            <person name="Spieth J."/>
            <person name="Ryan E."/>
            <person name="Andrews S."/>
            <person name="Geisel C."/>
            <person name="Layman D."/>
            <person name="Du H."/>
            <person name="Ali J."/>
            <person name="Berghoff A."/>
            <person name="Jones K."/>
            <person name="Drone K."/>
            <person name="Cotton M."/>
            <person name="Joshu C."/>
            <person name="Antonoiu B."/>
            <person name="Zidanic M."/>
            <person name="Strong C."/>
            <person name="Sun H."/>
            <person name="Lamar B."/>
            <person name="Yordan C."/>
            <person name="Ma P."/>
            <person name="Zhong J."/>
            <person name="Preston R."/>
            <person name="Vil D."/>
            <person name="Shekher M."/>
            <person name="Matero A."/>
            <person name="Shah R."/>
            <person name="Swaby I.K."/>
            <person name="O'Shaughnessy A."/>
            <person name="Rodriguez M."/>
            <person name="Hoffman J."/>
            <person name="Till S."/>
            <person name="Granat S."/>
            <person name="Shohdy N."/>
            <person name="Hasegawa A."/>
            <person name="Hameed A."/>
            <person name="Lodhi M."/>
            <person name="Johnson A."/>
            <person name="Chen E."/>
            <person name="Marra M.A."/>
            <person name="Martienssen R."/>
            <person name="McCombie W.R."/>
        </authorList>
    </citation>
    <scope>NUCLEOTIDE SEQUENCE [LARGE SCALE GENOMIC DNA]</scope>
    <source>
        <strain>cv. Columbia</strain>
    </source>
</reference>
<reference key="2">
    <citation type="journal article" date="2017" name="Plant J.">
        <title>Araport11: a complete reannotation of the Arabidopsis thaliana reference genome.</title>
        <authorList>
            <person name="Cheng C.Y."/>
            <person name="Krishnakumar V."/>
            <person name="Chan A.P."/>
            <person name="Thibaud-Nissen F."/>
            <person name="Schobel S."/>
            <person name="Town C.D."/>
        </authorList>
    </citation>
    <scope>GENOME REANNOTATION</scope>
    <source>
        <strain>cv. Columbia</strain>
    </source>
</reference>
<reference key="3">
    <citation type="journal article" date="2003" name="Science">
        <title>Empirical analysis of transcriptional activity in the Arabidopsis genome.</title>
        <authorList>
            <person name="Yamada K."/>
            <person name="Lim J."/>
            <person name="Dale J.M."/>
            <person name="Chen H."/>
            <person name="Shinn P."/>
            <person name="Palm C.J."/>
            <person name="Southwick A.M."/>
            <person name="Wu H.C."/>
            <person name="Kim C.J."/>
            <person name="Nguyen M."/>
            <person name="Pham P.K."/>
            <person name="Cheuk R.F."/>
            <person name="Karlin-Newmann G."/>
            <person name="Liu S.X."/>
            <person name="Lam B."/>
            <person name="Sakano H."/>
            <person name="Wu T."/>
            <person name="Yu G."/>
            <person name="Miranda M."/>
            <person name="Quach H.L."/>
            <person name="Tripp M."/>
            <person name="Chang C.H."/>
            <person name="Lee J.M."/>
            <person name="Toriumi M.J."/>
            <person name="Chan M.M."/>
            <person name="Tang C.C."/>
            <person name="Onodera C.S."/>
            <person name="Deng J.M."/>
            <person name="Akiyama K."/>
            <person name="Ansari Y."/>
            <person name="Arakawa T."/>
            <person name="Banh J."/>
            <person name="Banno F."/>
            <person name="Bowser L."/>
            <person name="Brooks S.Y."/>
            <person name="Carninci P."/>
            <person name="Chao Q."/>
            <person name="Choy N."/>
            <person name="Enju A."/>
            <person name="Goldsmith A.D."/>
            <person name="Gurjal M."/>
            <person name="Hansen N.F."/>
            <person name="Hayashizaki Y."/>
            <person name="Johnson-Hopson C."/>
            <person name="Hsuan V.W."/>
            <person name="Iida K."/>
            <person name="Karnes M."/>
            <person name="Khan S."/>
            <person name="Koesema E."/>
            <person name="Ishida J."/>
            <person name="Jiang P.X."/>
            <person name="Jones T."/>
            <person name="Kawai J."/>
            <person name="Kamiya A."/>
            <person name="Meyers C."/>
            <person name="Nakajima M."/>
            <person name="Narusaka M."/>
            <person name="Seki M."/>
            <person name="Sakurai T."/>
            <person name="Satou M."/>
            <person name="Tamse R."/>
            <person name="Vaysberg M."/>
            <person name="Wallender E.K."/>
            <person name="Wong C."/>
            <person name="Yamamura Y."/>
            <person name="Yuan S."/>
            <person name="Shinozaki K."/>
            <person name="Davis R.W."/>
            <person name="Theologis A."/>
            <person name="Ecker J.R."/>
        </authorList>
    </citation>
    <scope>NUCLEOTIDE SEQUENCE [LARGE SCALE MRNA]</scope>
    <source>
        <strain>cv. Columbia</strain>
    </source>
</reference>
<reference key="4">
    <citation type="journal article" date="2008" name="Plant Physiol.">
        <title>Sequence variation of microRNAs and their binding sites in Arabidopsis.</title>
        <authorList>
            <person name="Ehrenreich I.M."/>
            <person name="Purugganan M.D."/>
        </authorList>
    </citation>
    <scope>NUCLEOTIDE SEQUENCE [GENOMIC DNA] OF 372-531</scope>
    <scope>VARIANT PRO-471 DEL</scope>
    <source>
        <strain>cv. Ag-0</strain>
        <strain>cv. An-1</strain>
        <strain>cv. Bay-0</strain>
        <strain>cv. Br-0</strain>
        <strain>cv. C24</strain>
        <strain>cv. Ct-1</strain>
        <strain>cv. Cvi-1</strain>
        <strain>cv. Edi-0</strain>
        <strain>cv. Ei-2</strain>
        <strain>cv. Ga-0</strain>
        <strain>cv. Gy-0</strain>
        <strain>cv. Kas-2</strain>
        <strain>cv. Ll-0</strain>
        <strain>cv. Mrk-0</strain>
        <strain>cv. Ms-0</strain>
        <strain>cv. Mt-0</strain>
        <strain>cv. Nd-1</strain>
        <strain>cv. Nok-3</strain>
        <strain>cv. Oy-0</strain>
        <strain>cv. Sorbo</strain>
        <strain>cv. Wa-1</strain>
        <strain>cv. Wassilewskija</strain>
        <strain>cv. Wei-0</strain>
        <strain>cv. Wt-5</strain>
    </source>
</reference>
<reference key="5">
    <citation type="journal article" date="2002" name="Plant Mol. Biol.">
        <title>Auxin-responsive gene expression: genes, promoters and regulatory factors.</title>
        <authorList>
            <person name="Hagen G."/>
            <person name="Guilfoyle T.J."/>
        </authorList>
    </citation>
    <scope>GENE FAMILY</scope>
    <scope>NOMENCLATURE</scope>
    <scope>FUNCTION</scope>
</reference>
<reference key="6">
    <citation type="journal article" date="2008" name="Trends Plant Sci.">
        <title>The plant B3 superfamily.</title>
        <authorList>
            <person name="Swaminathan K."/>
            <person name="Peterson K."/>
            <person name="Jack T."/>
        </authorList>
    </citation>
    <scope>GENE FAMILY</scope>
</reference>
<keyword id="KW-0927">Auxin signaling pathway</keyword>
<keyword id="KW-0238">DNA-binding</keyword>
<keyword id="KW-0539">Nucleus</keyword>
<keyword id="KW-1185">Reference proteome</keyword>
<keyword id="KW-0804">Transcription</keyword>
<keyword id="KW-0805">Transcription regulation</keyword>
<accession>Q93YR9</accession>
<accession>B2CTE3</accession>
<accession>B2CTE4</accession>
<accession>Q9SZW1</accession>
<gene>
    <name type="primary">ARF16</name>
    <name type="ordered locus">At4g30080</name>
    <name type="ORF">F6G3.110</name>
</gene>
<dbReference type="EMBL" id="AL078464">
    <property type="protein sequence ID" value="CAB43843.1"/>
    <property type="status" value="ALT_SEQ"/>
    <property type="molecule type" value="Genomic_DNA"/>
</dbReference>
<dbReference type="EMBL" id="AL161576">
    <property type="protein sequence ID" value="CAB81001.1"/>
    <property type="status" value="ALT_SEQ"/>
    <property type="molecule type" value="Genomic_DNA"/>
</dbReference>
<dbReference type="EMBL" id="CP002687">
    <property type="protein sequence ID" value="AEE85718.1"/>
    <property type="molecule type" value="Genomic_DNA"/>
</dbReference>
<dbReference type="EMBL" id="AY059792">
    <property type="protein sequence ID" value="AAL24140.1"/>
    <property type="molecule type" value="mRNA"/>
</dbReference>
<dbReference type="EMBL" id="AY091198">
    <property type="protein sequence ID" value="AAM14137.1"/>
    <property type="molecule type" value="mRNA"/>
</dbReference>
<dbReference type="EMBL" id="EU550120">
    <property type="protein sequence ID" value="ACB30906.1"/>
    <property type="molecule type" value="Genomic_DNA"/>
</dbReference>
<dbReference type="EMBL" id="EU550121">
    <property type="protein sequence ID" value="ACB30907.1"/>
    <property type="molecule type" value="Genomic_DNA"/>
</dbReference>
<dbReference type="EMBL" id="EU550122">
    <property type="protein sequence ID" value="ACB30908.1"/>
    <property type="molecule type" value="Genomic_DNA"/>
</dbReference>
<dbReference type="EMBL" id="EU550123">
    <property type="protein sequence ID" value="ACB30909.1"/>
    <property type="molecule type" value="Genomic_DNA"/>
</dbReference>
<dbReference type="EMBL" id="EU550124">
    <property type="protein sequence ID" value="ACB30910.1"/>
    <property type="molecule type" value="Genomic_DNA"/>
</dbReference>
<dbReference type="EMBL" id="EU550125">
    <property type="protein sequence ID" value="ACB30911.1"/>
    <property type="molecule type" value="Genomic_DNA"/>
</dbReference>
<dbReference type="EMBL" id="EU550126">
    <property type="protein sequence ID" value="ACB30912.1"/>
    <property type="molecule type" value="Genomic_DNA"/>
</dbReference>
<dbReference type="EMBL" id="EU550127">
    <property type="protein sequence ID" value="ACB30913.1"/>
    <property type="molecule type" value="Genomic_DNA"/>
</dbReference>
<dbReference type="EMBL" id="EU550128">
    <property type="protein sequence ID" value="ACB30914.1"/>
    <property type="molecule type" value="Genomic_DNA"/>
</dbReference>
<dbReference type="EMBL" id="EU550129">
    <property type="protein sequence ID" value="ACB30915.1"/>
    <property type="molecule type" value="Genomic_DNA"/>
</dbReference>
<dbReference type="EMBL" id="EU550130">
    <property type="protein sequence ID" value="ACB30916.1"/>
    <property type="molecule type" value="Genomic_DNA"/>
</dbReference>
<dbReference type="EMBL" id="EU550131">
    <property type="protein sequence ID" value="ACB30917.1"/>
    <property type="molecule type" value="Genomic_DNA"/>
</dbReference>
<dbReference type="EMBL" id="EU550132">
    <property type="protein sequence ID" value="ACB30918.1"/>
    <property type="molecule type" value="Genomic_DNA"/>
</dbReference>
<dbReference type="EMBL" id="EU550133">
    <property type="protein sequence ID" value="ACB30919.1"/>
    <property type="molecule type" value="Genomic_DNA"/>
</dbReference>
<dbReference type="EMBL" id="EU550134">
    <property type="protein sequence ID" value="ACB30920.1"/>
    <property type="molecule type" value="Genomic_DNA"/>
</dbReference>
<dbReference type="EMBL" id="EU550135">
    <property type="protein sequence ID" value="ACB30921.1"/>
    <property type="molecule type" value="Genomic_DNA"/>
</dbReference>
<dbReference type="EMBL" id="EU550136">
    <property type="protein sequence ID" value="ACB30922.1"/>
    <property type="molecule type" value="Genomic_DNA"/>
</dbReference>
<dbReference type="EMBL" id="EU550137">
    <property type="protein sequence ID" value="ACB30923.1"/>
    <property type="molecule type" value="Genomic_DNA"/>
</dbReference>
<dbReference type="EMBL" id="EU550138">
    <property type="protein sequence ID" value="ACB30924.1"/>
    <property type="molecule type" value="Genomic_DNA"/>
</dbReference>
<dbReference type="EMBL" id="EU550139">
    <property type="protein sequence ID" value="ACB30925.1"/>
    <property type="molecule type" value="Genomic_DNA"/>
</dbReference>
<dbReference type="EMBL" id="EU550140">
    <property type="protein sequence ID" value="ACB30926.1"/>
    <property type="molecule type" value="Genomic_DNA"/>
</dbReference>
<dbReference type="EMBL" id="EU550141">
    <property type="protein sequence ID" value="ACB30927.1"/>
    <property type="molecule type" value="Genomic_DNA"/>
</dbReference>
<dbReference type="EMBL" id="EU550142">
    <property type="protein sequence ID" value="ACB30928.1"/>
    <property type="molecule type" value="Genomic_DNA"/>
</dbReference>
<dbReference type="EMBL" id="EU550143">
    <property type="protein sequence ID" value="ACB30929.1"/>
    <property type="molecule type" value="Genomic_DNA"/>
</dbReference>
<dbReference type="PIR" id="T08984">
    <property type="entry name" value="T08984"/>
</dbReference>
<dbReference type="RefSeq" id="NP_567841.1">
    <property type="nucleotide sequence ID" value="NM_119154.5"/>
</dbReference>
<dbReference type="SMR" id="Q93YR9"/>
<dbReference type="BioGRID" id="14418">
    <property type="interactions" value="11"/>
</dbReference>
<dbReference type="FunCoup" id="Q93YR9">
    <property type="interactions" value="1789"/>
</dbReference>
<dbReference type="IntAct" id="Q93YR9">
    <property type="interactions" value="25"/>
</dbReference>
<dbReference type="STRING" id="3702.Q93YR9"/>
<dbReference type="PaxDb" id="3702-AT4G30080.1"/>
<dbReference type="ProteomicsDB" id="246992"/>
<dbReference type="EnsemblPlants" id="AT4G30080.1">
    <property type="protein sequence ID" value="AT4G30080.1"/>
    <property type="gene ID" value="AT4G30080"/>
</dbReference>
<dbReference type="GeneID" id="829131"/>
<dbReference type="Gramene" id="AT4G30080.1">
    <property type="protein sequence ID" value="AT4G30080.1"/>
    <property type="gene ID" value="AT4G30080"/>
</dbReference>
<dbReference type="KEGG" id="ath:AT4G30080"/>
<dbReference type="Araport" id="AT4G30080"/>
<dbReference type="TAIR" id="AT4G30080">
    <property type="gene designation" value="ARF16"/>
</dbReference>
<dbReference type="eggNOG" id="ENOG502QTRP">
    <property type="taxonomic scope" value="Eukaryota"/>
</dbReference>
<dbReference type="HOGENOM" id="CLU_002626_3_5_1"/>
<dbReference type="InParanoid" id="Q93YR9"/>
<dbReference type="OMA" id="IIAKDMH"/>
<dbReference type="PhylomeDB" id="Q93YR9"/>
<dbReference type="PRO" id="PR:Q93YR9"/>
<dbReference type="Proteomes" id="UP000006548">
    <property type="component" value="Chromosome 4"/>
</dbReference>
<dbReference type="ExpressionAtlas" id="Q93YR9">
    <property type="expression patterns" value="baseline and differential"/>
</dbReference>
<dbReference type="GO" id="GO:0005634">
    <property type="term" value="C:nucleus"/>
    <property type="evidence" value="ECO:0000314"/>
    <property type="project" value="TAIR"/>
</dbReference>
<dbReference type="GO" id="GO:0003677">
    <property type="term" value="F:DNA binding"/>
    <property type="evidence" value="ECO:0007669"/>
    <property type="project" value="UniProtKB-KW"/>
</dbReference>
<dbReference type="GO" id="GO:0003700">
    <property type="term" value="F:DNA-binding transcription factor activity"/>
    <property type="evidence" value="ECO:0000250"/>
    <property type="project" value="TAIR"/>
</dbReference>
<dbReference type="GO" id="GO:0035198">
    <property type="term" value="F:miRNA binding"/>
    <property type="evidence" value="ECO:0000250"/>
    <property type="project" value="TAIR"/>
</dbReference>
<dbReference type="GO" id="GO:0009734">
    <property type="term" value="P:auxin-activated signaling pathway"/>
    <property type="evidence" value="ECO:0007669"/>
    <property type="project" value="UniProtKB-KW"/>
</dbReference>
<dbReference type="GO" id="GO:0051301">
    <property type="term" value="P:cell division"/>
    <property type="evidence" value="ECO:0000316"/>
    <property type="project" value="TAIR"/>
</dbReference>
<dbReference type="GO" id="GO:0007389">
    <property type="term" value="P:pattern specification process"/>
    <property type="evidence" value="ECO:0000314"/>
    <property type="project" value="TAIR"/>
</dbReference>
<dbReference type="GO" id="GO:0009733">
    <property type="term" value="P:response to auxin"/>
    <property type="evidence" value="ECO:0000270"/>
    <property type="project" value="TAIR"/>
</dbReference>
<dbReference type="GO" id="GO:0048829">
    <property type="term" value="P:root cap development"/>
    <property type="evidence" value="ECO:0000315"/>
    <property type="project" value="TAIR"/>
</dbReference>
<dbReference type="CDD" id="cd10017">
    <property type="entry name" value="B3_DNA"/>
    <property type="match status" value="1"/>
</dbReference>
<dbReference type="FunFam" id="2.30.30.1040:FF:000002">
    <property type="entry name" value="Auxin response factor"/>
    <property type="match status" value="1"/>
</dbReference>
<dbReference type="FunFam" id="2.40.330.10:FF:000001">
    <property type="entry name" value="Auxin response factor"/>
    <property type="match status" value="1"/>
</dbReference>
<dbReference type="Gene3D" id="2.30.30.1040">
    <property type="match status" value="1"/>
</dbReference>
<dbReference type="Gene3D" id="2.40.330.10">
    <property type="entry name" value="DNA-binding pseudobarrel domain"/>
    <property type="match status" value="1"/>
</dbReference>
<dbReference type="Gene3D" id="3.10.20.90">
    <property type="entry name" value="Phosphatidylinositol 3-kinase Catalytic Subunit, Chain A, domain 1"/>
    <property type="match status" value="1"/>
</dbReference>
<dbReference type="InterPro" id="IPR010525">
    <property type="entry name" value="ARF_dom"/>
</dbReference>
<dbReference type="InterPro" id="IPR044835">
    <property type="entry name" value="ARF_plant"/>
</dbReference>
<dbReference type="InterPro" id="IPR003340">
    <property type="entry name" value="B3_DNA-bd"/>
</dbReference>
<dbReference type="InterPro" id="IPR015300">
    <property type="entry name" value="DNA-bd_pseudobarrel_sf"/>
</dbReference>
<dbReference type="InterPro" id="IPR053793">
    <property type="entry name" value="PB1-like"/>
</dbReference>
<dbReference type="PANTHER" id="PTHR31384:SF160">
    <property type="entry name" value="AUXIN RESPONSE FACTOR 16"/>
    <property type="match status" value="1"/>
</dbReference>
<dbReference type="PANTHER" id="PTHR31384">
    <property type="entry name" value="AUXIN RESPONSE FACTOR 4-RELATED"/>
    <property type="match status" value="1"/>
</dbReference>
<dbReference type="Pfam" id="PF06507">
    <property type="entry name" value="ARF_AD"/>
    <property type="match status" value="1"/>
</dbReference>
<dbReference type="Pfam" id="PF02362">
    <property type="entry name" value="B3"/>
    <property type="match status" value="1"/>
</dbReference>
<dbReference type="SMART" id="SM01019">
    <property type="entry name" value="B3"/>
    <property type="match status" value="1"/>
</dbReference>
<dbReference type="SUPFAM" id="SSF101936">
    <property type="entry name" value="DNA-binding pseudobarrel domain"/>
    <property type="match status" value="1"/>
</dbReference>
<dbReference type="PROSITE" id="PS50863">
    <property type="entry name" value="B3"/>
    <property type="match status" value="1"/>
</dbReference>
<dbReference type="PROSITE" id="PS51745">
    <property type="entry name" value="PB1"/>
    <property type="match status" value="1"/>
</dbReference>
<protein>
    <recommendedName>
        <fullName>Auxin response factor 16</fullName>
    </recommendedName>
</protein>
<sequence length="670" mass="73979">MINVMNPMKGGTEKGLDPQLWHACAGGMVRMPPMNSKVFYFPQGHAENAYDCVDFGNLPIPPMVLCRVLAIKYMADAESDEVFAKLRLIPLKDDEYVDHEYGDGEDSNGFESNSEKTPSFAKTLTQSDANNGGGFSVPRYCAETIFPRLDYNAEPPVQTILAKDVHGDVWKFRHIYRGTPRRHLLTTGWSNFVNQKKLVAGDSIVFMRAENGDLCVGIRRAKRGGIGNGPEYSAGWNPIGGSCGYSSLLREDESNSLRRSNCSLADRKGKVTAESVIEAATLAISGRPFEVVYYPRASTSEFCVKALDARAAMRIPWCSGMRFKMAFETEDSSRISWFMGTVSAVNVSDPIRWPNSPWRLLQVAWDEPDLLQNVKRVNPWLVELVSNVHPIPLTSFSPPRKKMRLPQHPDYNNLINSIPVPSFPSNPLIRSSPLSSVLDNVPVGLQGARHNAHQYYGLSSSDLHHYYLNRPPPPPPPSSLQLSPSLGLRNIDTKNEKGFCFLTMGTTPCNDTKSKKSHIVLFGKLILPEEQLSEKGSTDTANIEKTQISSGGSNQNGVAGREFSSSDEGSPCSKKVHDASGLETGHCKVFMESDDVGRTLDLSVLGSYEELSRKLSDMFGIKKSEMLSSVLYRDASGAIKYAGNEPFSEFLKTARRLTILTEQGSESVVV</sequence>
<comment type="function">
    <text evidence="5">Auxin response factors (ARFs) are transcriptional factors that bind specifically to the DNA sequence 5'-TGTCTC-3' found in the auxin-responsive promoter elements (AuxREs). Could act as transcriptional activator or repressor. Formation of heterodimers with Aux/IAA proteins may alter their ability to modulate early auxin response genes expression.</text>
</comment>
<comment type="subunit">
    <text evidence="1">Homodimers and heterodimers.</text>
</comment>
<comment type="interaction">
    <interactant intactId="EBI-3947588">
        <id>Q93YR9</id>
    </interactant>
    <interactant intactId="EBI-2000137">
        <id>Q9MAI5</id>
        <label>ERF8</label>
    </interactant>
    <organismsDiffer>false</organismsDiffer>
    <experiments>3</experiments>
</comment>
<comment type="interaction">
    <interactant intactId="EBI-3947588">
        <id>Q93YR9</id>
    </interactant>
    <interactant intactId="EBI-3946408">
        <id>Q8H174</id>
        <label>IAA31</label>
    </interactant>
    <organismsDiffer>false</organismsDiffer>
    <experiments>10</experiments>
</comment>
<comment type="interaction">
    <interactant intactId="EBI-3947588">
        <id>Q93YR9</id>
    </interactant>
    <interactant intactId="EBI-3946739">
        <id>Q9FKM7</id>
        <label>IAA33</label>
    </interactant>
    <organismsDiffer>false</organismsDiffer>
    <experiments>7</experiments>
</comment>
<comment type="interaction">
    <interactant intactId="EBI-3947588">
        <id>Q93YR9</id>
    </interactant>
    <interactant intactId="EBI-3946487">
        <id>P33078</id>
        <label>IAA5</label>
    </interactant>
    <organismsDiffer>false</organismsDiffer>
    <experiments>4</experiments>
</comment>
<comment type="interaction">
    <interactant intactId="EBI-3947588">
        <id>Q93YR9</id>
    </interactant>
    <interactant intactId="EBI-25511270">
        <id>Q9FX36</id>
        <label>MYB54</label>
    </interactant>
    <organismsDiffer>false</organismsDiffer>
    <experiments>3</experiments>
</comment>
<comment type="subcellular location">
    <subcellularLocation>
        <location>Nucleus</location>
    </subcellularLocation>
</comment>
<comment type="domain">
    <text>Interactions between auxin response factors (ARFs) and Aux/IAA proteins occur through their C-terminal dimerization domains III and IV.</text>
</comment>
<comment type="similarity">
    <text evidence="6">Belongs to the ARF family.</text>
</comment>
<comment type="sequence caution" evidence="6">
    <conflict type="erroneous gene model prediction">
        <sequence resource="EMBL-CDS" id="CAB43843"/>
    </conflict>
</comment>
<comment type="sequence caution" evidence="6">
    <conflict type="erroneous gene model prediction">
        <sequence resource="EMBL-CDS" id="CAB81001"/>
    </conflict>
</comment>
<name>ARFP_ARATH</name>
<feature type="chain" id="PRO_0000111520" description="Auxin response factor 16">
    <location>
        <begin position="1"/>
        <end position="670"/>
    </location>
</feature>
<feature type="domain" description="PB1" evidence="3">
    <location>
        <begin position="584"/>
        <end position="664"/>
    </location>
</feature>
<feature type="DNA-binding region" description="TF-B3" evidence="2">
    <location>
        <begin position="120"/>
        <end position="222"/>
    </location>
</feature>
<feature type="region of interest" description="Disordered" evidence="4">
    <location>
        <begin position="545"/>
        <end position="579"/>
    </location>
</feature>
<feature type="compositionally biased region" description="Polar residues" evidence="4">
    <location>
        <begin position="545"/>
        <end position="557"/>
    </location>
</feature>
<feature type="sequence variant" description="In strain: cv. Ag-0, cv. An-1, cv. Bay-0, cv. Br-0, cv. Cvi-0, cv. Edi-0, cv. Gy-0, cv. Kas-2, cv. Oy-0 and cv. Sorbo.">
    <location>
        <position position="477"/>
    </location>
</feature>
<evidence type="ECO:0000250" key="1"/>
<evidence type="ECO:0000255" key="2">
    <source>
        <dbReference type="PROSITE-ProRule" id="PRU00326"/>
    </source>
</evidence>
<evidence type="ECO:0000255" key="3">
    <source>
        <dbReference type="PROSITE-ProRule" id="PRU01081"/>
    </source>
</evidence>
<evidence type="ECO:0000256" key="4">
    <source>
        <dbReference type="SAM" id="MobiDB-lite"/>
    </source>
</evidence>
<evidence type="ECO:0000269" key="5">
    <source>
    </source>
</evidence>
<evidence type="ECO:0000305" key="6"/>